<sequence>MLKGNLAGLMKQAQQMQENMKKMQEQLALIEVEGQSGAGLVKVTMTCRNEVRRVSIDPSLLADDKDMLEDLVAAAFNDAVRKAEATSQEKMSGMTSGLPLPPGFKLPF</sequence>
<protein>
    <recommendedName>
        <fullName evidence="1">Nucleoid-associated protein Bcep18194_A5127</fullName>
    </recommendedName>
</protein>
<keyword id="KW-0963">Cytoplasm</keyword>
<keyword id="KW-0238">DNA-binding</keyword>
<feature type="chain" id="PRO_1000003710" description="Nucleoid-associated protein Bcep18194_A5127">
    <location>
        <begin position="1"/>
        <end position="108"/>
    </location>
</feature>
<feature type="region of interest" description="Disordered" evidence="2">
    <location>
        <begin position="85"/>
        <end position="108"/>
    </location>
</feature>
<feature type="compositionally biased region" description="Polar residues" evidence="2">
    <location>
        <begin position="85"/>
        <end position="95"/>
    </location>
</feature>
<feature type="compositionally biased region" description="Pro residues" evidence="2">
    <location>
        <begin position="99"/>
        <end position="108"/>
    </location>
</feature>
<organism>
    <name type="scientific">Burkholderia lata (strain ATCC 17760 / DSM 23089 / LMG 22485 / NCIMB 9086 / R18194 / 383)</name>
    <dbReference type="NCBI Taxonomy" id="482957"/>
    <lineage>
        <taxon>Bacteria</taxon>
        <taxon>Pseudomonadati</taxon>
        <taxon>Pseudomonadota</taxon>
        <taxon>Betaproteobacteria</taxon>
        <taxon>Burkholderiales</taxon>
        <taxon>Burkholderiaceae</taxon>
        <taxon>Burkholderia</taxon>
        <taxon>Burkholderia cepacia complex</taxon>
    </lineage>
</organism>
<reference key="1">
    <citation type="submission" date="2005-10" db="EMBL/GenBank/DDBJ databases">
        <title>Complete sequence of chromosome 1 of Burkholderia sp. 383.</title>
        <authorList>
            <consortium name="US DOE Joint Genome Institute"/>
            <person name="Copeland A."/>
            <person name="Lucas S."/>
            <person name="Lapidus A."/>
            <person name="Barry K."/>
            <person name="Detter J.C."/>
            <person name="Glavina T."/>
            <person name="Hammon N."/>
            <person name="Israni S."/>
            <person name="Pitluck S."/>
            <person name="Chain P."/>
            <person name="Malfatti S."/>
            <person name="Shin M."/>
            <person name="Vergez L."/>
            <person name="Schmutz J."/>
            <person name="Larimer F."/>
            <person name="Land M."/>
            <person name="Kyrpides N."/>
            <person name="Lykidis A."/>
            <person name="Richardson P."/>
        </authorList>
    </citation>
    <scope>NUCLEOTIDE SEQUENCE [LARGE SCALE GENOMIC DNA]</scope>
    <source>
        <strain>ATCC 17760 / DSM 23089 / LMG 22485 / NCIMB 9086 / R18194 / 383</strain>
    </source>
</reference>
<evidence type="ECO:0000255" key="1">
    <source>
        <dbReference type="HAMAP-Rule" id="MF_00274"/>
    </source>
</evidence>
<evidence type="ECO:0000256" key="2">
    <source>
        <dbReference type="SAM" id="MobiDB-lite"/>
    </source>
</evidence>
<accession>Q39FP5</accession>
<proteinExistence type="inferred from homology"/>
<gene>
    <name type="ordered locus">Bcep18194_A5127</name>
</gene>
<dbReference type="EMBL" id="CP000151">
    <property type="protein sequence ID" value="ABB08721.1"/>
    <property type="molecule type" value="Genomic_DNA"/>
</dbReference>
<dbReference type="RefSeq" id="WP_006482124.1">
    <property type="nucleotide sequence ID" value="NZ_WNDV01000021.1"/>
</dbReference>
<dbReference type="SMR" id="Q39FP5"/>
<dbReference type="KEGG" id="bur:Bcep18194_A5127"/>
<dbReference type="HOGENOM" id="CLU_140930_0_0_4"/>
<dbReference type="Proteomes" id="UP000002705">
    <property type="component" value="Chromosome 1"/>
</dbReference>
<dbReference type="GO" id="GO:0043590">
    <property type="term" value="C:bacterial nucleoid"/>
    <property type="evidence" value="ECO:0007669"/>
    <property type="project" value="UniProtKB-UniRule"/>
</dbReference>
<dbReference type="GO" id="GO:0005829">
    <property type="term" value="C:cytosol"/>
    <property type="evidence" value="ECO:0007669"/>
    <property type="project" value="TreeGrafter"/>
</dbReference>
<dbReference type="GO" id="GO:0003677">
    <property type="term" value="F:DNA binding"/>
    <property type="evidence" value="ECO:0007669"/>
    <property type="project" value="UniProtKB-UniRule"/>
</dbReference>
<dbReference type="FunFam" id="3.30.1310.10:FF:000001">
    <property type="entry name" value="Nucleoid-associated protein YbaB"/>
    <property type="match status" value="1"/>
</dbReference>
<dbReference type="Gene3D" id="3.30.1310.10">
    <property type="entry name" value="Nucleoid-associated protein YbaB-like domain"/>
    <property type="match status" value="1"/>
</dbReference>
<dbReference type="HAMAP" id="MF_00274">
    <property type="entry name" value="DNA_YbaB_EbfC"/>
    <property type="match status" value="1"/>
</dbReference>
<dbReference type="InterPro" id="IPR036894">
    <property type="entry name" value="YbaB-like_sf"/>
</dbReference>
<dbReference type="InterPro" id="IPR004401">
    <property type="entry name" value="YbaB/EbfC"/>
</dbReference>
<dbReference type="NCBIfam" id="TIGR00103">
    <property type="entry name" value="DNA_YbaB_EbfC"/>
    <property type="match status" value="1"/>
</dbReference>
<dbReference type="PANTHER" id="PTHR33449">
    <property type="entry name" value="NUCLEOID-ASSOCIATED PROTEIN YBAB"/>
    <property type="match status" value="1"/>
</dbReference>
<dbReference type="PANTHER" id="PTHR33449:SF1">
    <property type="entry name" value="NUCLEOID-ASSOCIATED PROTEIN YBAB"/>
    <property type="match status" value="1"/>
</dbReference>
<dbReference type="Pfam" id="PF02575">
    <property type="entry name" value="YbaB_DNA_bd"/>
    <property type="match status" value="1"/>
</dbReference>
<dbReference type="PIRSF" id="PIRSF004555">
    <property type="entry name" value="UCP004555"/>
    <property type="match status" value="1"/>
</dbReference>
<dbReference type="SUPFAM" id="SSF82607">
    <property type="entry name" value="YbaB-like"/>
    <property type="match status" value="1"/>
</dbReference>
<comment type="function">
    <text evidence="1">Binds to DNA and alters its conformation. May be involved in regulation of gene expression, nucleoid organization and DNA protection.</text>
</comment>
<comment type="subunit">
    <text evidence="1">Homodimer.</text>
</comment>
<comment type="subcellular location">
    <subcellularLocation>
        <location evidence="1">Cytoplasm</location>
        <location evidence="1">Nucleoid</location>
    </subcellularLocation>
</comment>
<comment type="similarity">
    <text evidence="1">Belongs to the YbaB/EbfC family.</text>
</comment>
<name>Y5127_BURL3</name>